<evidence type="ECO:0000255" key="1">
    <source>
        <dbReference type="HAMAP-Rule" id="MF_00498"/>
    </source>
</evidence>
<evidence type="ECO:0000256" key="2">
    <source>
        <dbReference type="SAM" id="MobiDB-lite"/>
    </source>
</evidence>
<proteinExistence type="inferred from homology"/>
<organism>
    <name type="scientific">Pyrobaculum neutrophilum (strain DSM 2338 / JCM 9278 / NBRC 100436 / V24Sta)</name>
    <name type="common">Thermoproteus neutrophilus</name>
    <dbReference type="NCBI Taxonomy" id="444157"/>
    <lineage>
        <taxon>Archaea</taxon>
        <taxon>Thermoproteota</taxon>
        <taxon>Thermoprotei</taxon>
        <taxon>Thermoproteales</taxon>
        <taxon>Thermoproteaceae</taxon>
        <taxon>Pyrobaculum</taxon>
    </lineage>
</organism>
<reference key="1">
    <citation type="submission" date="2008-03" db="EMBL/GenBank/DDBJ databases">
        <title>Complete sequence of Thermoproteus neutrophilus V24Sta.</title>
        <authorList>
            <consortium name="US DOE Joint Genome Institute"/>
            <person name="Copeland A."/>
            <person name="Lucas S."/>
            <person name="Lapidus A."/>
            <person name="Glavina del Rio T."/>
            <person name="Dalin E."/>
            <person name="Tice H."/>
            <person name="Bruce D."/>
            <person name="Goodwin L."/>
            <person name="Pitluck S."/>
            <person name="Sims D."/>
            <person name="Brettin T."/>
            <person name="Detter J.C."/>
            <person name="Han C."/>
            <person name="Kuske C.R."/>
            <person name="Schmutz J."/>
            <person name="Larimer F."/>
            <person name="Land M."/>
            <person name="Hauser L."/>
            <person name="Kyrpides N."/>
            <person name="Mikhailova N."/>
            <person name="Biddle J.F."/>
            <person name="Zhang Z."/>
            <person name="Fitz-Gibbon S.T."/>
            <person name="Lowe T.M."/>
            <person name="Saltikov C."/>
            <person name="House C.H."/>
            <person name="Richardson P."/>
        </authorList>
    </citation>
    <scope>NUCLEOTIDE SEQUENCE [LARGE SCALE GENOMIC DNA]</scope>
    <source>
        <strain>DSM 2338 / JCM 9278 / NBRC 100436 / V24Sta</strain>
    </source>
</reference>
<gene>
    <name type="ordered locus">Tneu_1978</name>
</gene>
<comment type="similarity">
    <text evidence="1">Belongs to the UPF0179 family.</text>
</comment>
<accession>B1YC39</accession>
<name>Y1978_PYRNV</name>
<dbReference type="EMBL" id="CP001014">
    <property type="protein sequence ID" value="ACB40893.1"/>
    <property type="molecule type" value="Genomic_DNA"/>
</dbReference>
<dbReference type="RefSeq" id="WP_012351312.1">
    <property type="nucleotide sequence ID" value="NC_010525.1"/>
</dbReference>
<dbReference type="STRING" id="444157.Tneu_1978"/>
<dbReference type="GeneID" id="6165589"/>
<dbReference type="KEGG" id="tne:Tneu_1978"/>
<dbReference type="eggNOG" id="arCOG04477">
    <property type="taxonomic scope" value="Archaea"/>
</dbReference>
<dbReference type="HOGENOM" id="CLU_121764_0_0_2"/>
<dbReference type="OrthoDB" id="24613at2157"/>
<dbReference type="Proteomes" id="UP000001694">
    <property type="component" value="Chromosome"/>
</dbReference>
<dbReference type="HAMAP" id="MF_00498">
    <property type="entry name" value="UPF0179"/>
    <property type="match status" value="1"/>
</dbReference>
<dbReference type="InterPro" id="IPR005369">
    <property type="entry name" value="UPF0179"/>
</dbReference>
<dbReference type="PANTHER" id="PTHR40699">
    <property type="entry name" value="UPF0179 PROTEIN MJ1627"/>
    <property type="match status" value="1"/>
</dbReference>
<dbReference type="PANTHER" id="PTHR40699:SF1">
    <property type="entry name" value="UPF0179 PROTEIN MJ1627"/>
    <property type="match status" value="1"/>
</dbReference>
<dbReference type="Pfam" id="PF03684">
    <property type="entry name" value="UPF0179"/>
    <property type="match status" value="1"/>
</dbReference>
<feature type="chain" id="PRO_0000378139" description="UPF0179 protein Tneu_1978">
    <location>
        <begin position="1"/>
        <end position="166"/>
    </location>
</feature>
<feature type="region of interest" description="Disordered" evidence="2">
    <location>
        <begin position="140"/>
        <end position="166"/>
    </location>
</feature>
<feature type="compositionally biased region" description="Pro residues" evidence="2">
    <location>
        <begin position="157"/>
        <end position="166"/>
    </location>
</feature>
<protein>
    <recommendedName>
        <fullName evidence="1">UPF0179 protein Tneu_1978</fullName>
    </recommendedName>
</protein>
<sequence length="166" mass="18042">MRRVVTLVSKEQAEVGHRFRVVEVPDECRTCRLYPVCMGRLTPGRAYKIVEVRPYMGQRCKITDGEMVPVVVEEAPMIGLVPLNKALEGVVVTFEGECAGCEGCPQQVQVGEKIKIVRVLGRAKCRGGDFAIVEFYALGPPSPSKSGGATASRDPSRAPPSRPLSK</sequence>